<feature type="chain" id="PRO_0000059300" description="PHD finger protein 10">
    <location>
        <begin position="1"/>
        <end position="506"/>
    </location>
</feature>
<feature type="zinc finger region" description="PHD-type 1; degenerate" evidence="2">
    <location>
        <begin position="387"/>
        <end position="444"/>
    </location>
</feature>
<feature type="zinc finger region" description="PHD-type 2; degenerate" evidence="2">
    <location>
        <begin position="446"/>
        <end position="489"/>
    </location>
</feature>
<feature type="region of interest" description="Disordered" evidence="3">
    <location>
        <begin position="1"/>
        <end position="66"/>
    </location>
</feature>
<feature type="region of interest" description="SAY">
    <location>
        <begin position="90"/>
        <end position="299"/>
    </location>
</feature>
<feature type="region of interest" description="Disordered" evidence="3">
    <location>
        <begin position="293"/>
        <end position="377"/>
    </location>
</feature>
<feature type="compositionally biased region" description="Basic and acidic residues" evidence="3">
    <location>
        <begin position="23"/>
        <end position="35"/>
    </location>
</feature>
<feature type="compositionally biased region" description="Polar residues" evidence="3">
    <location>
        <begin position="52"/>
        <end position="66"/>
    </location>
</feature>
<feature type="compositionally biased region" description="Low complexity" evidence="3">
    <location>
        <begin position="326"/>
        <end position="338"/>
    </location>
</feature>
<feature type="compositionally biased region" description="Basic and acidic residues" evidence="3">
    <location>
        <begin position="353"/>
        <end position="367"/>
    </location>
</feature>
<comment type="function">
    <text evidence="1">Involved in transcription activity regulation by chromatin remodeling in the context of the neural progenitors-specific chromatin remodeling complex (npBAF complex). May play a role in the proliferation of neural progenitors (By similarity).</text>
</comment>
<comment type="subunit">
    <text evidence="1">Component of neural progenitors-specific chromatin remodeling complex (npBAF complex), a subfamily of ATP-dependent SWI/SNF chromatin remodeling complexes.</text>
</comment>
<comment type="subcellular location">
    <subcellularLocation>
        <location evidence="1">Nucleus</location>
    </subcellularLocation>
</comment>
<comment type="similarity">
    <text evidence="4">Belongs to the SAYP family.</text>
</comment>
<comment type="caution">
    <text evidence="4">It is uncertain whether Met-1 or Met-90 is the initiator.</text>
</comment>
<comment type="sequence caution" evidence="4">
    <conflict type="erroneous initiation">
        <sequence resource="EMBL-CDS" id="AAH82869"/>
    </conflict>
    <text>Truncated N-terminus.</text>
</comment>
<dbReference type="EMBL" id="BC082869">
    <property type="protein sequence ID" value="AAH82869.1"/>
    <property type="status" value="ALT_INIT"/>
    <property type="molecule type" value="mRNA"/>
</dbReference>
<dbReference type="RefSeq" id="NP_001088070.2">
    <property type="nucleotide sequence ID" value="NM_001094601.1"/>
</dbReference>
<dbReference type="SMR" id="Q63ZP1"/>
<dbReference type="DNASU" id="494765"/>
<dbReference type="GeneID" id="494765"/>
<dbReference type="KEGG" id="xla:494765"/>
<dbReference type="AGR" id="Xenbase:XB-GENE-940964"/>
<dbReference type="CTD" id="494765"/>
<dbReference type="Xenbase" id="XB-GENE-940964">
    <property type="gene designation" value="phf10.S"/>
</dbReference>
<dbReference type="OrthoDB" id="1903104at2759"/>
<dbReference type="Proteomes" id="UP000186698">
    <property type="component" value="Chromosome 5S"/>
</dbReference>
<dbReference type="Bgee" id="494765">
    <property type="expression patterns" value="Expressed in neurula embryo and 19 other cell types or tissues"/>
</dbReference>
<dbReference type="GO" id="GO:0071564">
    <property type="term" value="C:npBAF complex"/>
    <property type="evidence" value="ECO:0007669"/>
    <property type="project" value="InterPro"/>
</dbReference>
<dbReference type="GO" id="GO:0008270">
    <property type="term" value="F:zinc ion binding"/>
    <property type="evidence" value="ECO:0007669"/>
    <property type="project" value="UniProtKB-KW"/>
</dbReference>
<dbReference type="GO" id="GO:0007399">
    <property type="term" value="P:nervous system development"/>
    <property type="evidence" value="ECO:0007669"/>
    <property type="project" value="UniProtKB-KW"/>
</dbReference>
<dbReference type="CDD" id="cd15528">
    <property type="entry name" value="PHD1_PHF10"/>
    <property type="match status" value="1"/>
</dbReference>
<dbReference type="CDD" id="cd15529">
    <property type="entry name" value="PHD2_PHF10"/>
    <property type="match status" value="1"/>
</dbReference>
<dbReference type="CDD" id="cd21085">
    <property type="entry name" value="WH_NTD_PHF10"/>
    <property type="match status" value="1"/>
</dbReference>
<dbReference type="FunFam" id="3.30.40.10:FF:001470">
    <property type="entry name" value="PHD finger protein 10"/>
    <property type="match status" value="1"/>
</dbReference>
<dbReference type="Gene3D" id="3.30.40.10">
    <property type="entry name" value="Zinc/RING finger domain, C3HC4 (zinc finger)"/>
    <property type="match status" value="1"/>
</dbReference>
<dbReference type="InterPro" id="IPR038045">
    <property type="entry name" value="PHF10_PHD_finger_1"/>
</dbReference>
<dbReference type="InterPro" id="IPR011011">
    <property type="entry name" value="Znf_FYVE_PHD"/>
</dbReference>
<dbReference type="InterPro" id="IPR001965">
    <property type="entry name" value="Znf_PHD"/>
</dbReference>
<dbReference type="InterPro" id="IPR019787">
    <property type="entry name" value="Znf_PHD-finger"/>
</dbReference>
<dbReference type="InterPro" id="IPR013083">
    <property type="entry name" value="Znf_RING/FYVE/PHD"/>
</dbReference>
<dbReference type="PANTHER" id="PTHR45888">
    <property type="entry name" value="HL01030P-RELATED"/>
    <property type="match status" value="1"/>
</dbReference>
<dbReference type="PANTHER" id="PTHR45888:SF4">
    <property type="entry name" value="PHD FINGER PROTEIN 10"/>
    <property type="match status" value="1"/>
</dbReference>
<dbReference type="Pfam" id="PF00628">
    <property type="entry name" value="PHD"/>
    <property type="match status" value="2"/>
</dbReference>
<dbReference type="SMART" id="SM00249">
    <property type="entry name" value="PHD"/>
    <property type="match status" value="2"/>
</dbReference>
<dbReference type="SUPFAM" id="SSF57903">
    <property type="entry name" value="FYVE/PHD zinc finger"/>
    <property type="match status" value="2"/>
</dbReference>
<dbReference type="PROSITE" id="PS01359">
    <property type="entry name" value="ZF_PHD_1"/>
    <property type="match status" value="1"/>
</dbReference>
<dbReference type="PROSITE" id="PS50016">
    <property type="entry name" value="ZF_PHD_2"/>
    <property type="match status" value="2"/>
</dbReference>
<proteinExistence type="evidence at transcript level"/>
<accession>Q63ZP1</accession>
<gene>
    <name type="primary">phf10</name>
</gene>
<name>PHF10_XENLA</name>
<reference key="1">
    <citation type="submission" date="2004-09" db="EMBL/GenBank/DDBJ databases">
        <authorList>
            <consortium name="NIH - Xenopus Gene Collection (XGC) project"/>
        </authorList>
    </citation>
    <scope>NUCLEOTIDE SEQUENCE [LARGE SCALE MRNA]</scope>
    <source>
        <tissue>Embryo</tissue>
    </source>
</reference>
<organism>
    <name type="scientific">Xenopus laevis</name>
    <name type="common">African clawed frog</name>
    <dbReference type="NCBI Taxonomy" id="8355"/>
    <lineage>
        <taxon>Eukaryota</taxon>
        <taxon>Metazoa</taxon>
        <taxon>Chordata</taxon>
        <taxon>Craniata</taxon>
        <taxon>Vertebrata</taxon>
        <taxon>Euteleostomi</taxon>
        <taxon>Amphibia</taxon>
        <taxon>Batrachia</taxon>
        <taxon>Anura</taxon>
        <taxon>Pipoidea</taxon>
        <taxon>Pipidae</taxon>
        <taxon>Xenopodinae</taxon>
        <taxon>Xenopus</taxon>
        <taxon>Xenopus</taxon>
    </lineage>
</organism>
<protein>
    <recommendedName>
        <fullName>PHD finger protein 10</fullName>
    </recommendedName>
</protein>
<sequence>MAAVVSAKPLCDSEPAIPAPPSVKEDNSNDTKDPEENSNDGSQPAKRRRMSGDSTPSCENSNQDFGSSYFPAENVIEYKWPPDETGEYYMLQEQVSEYLGVTSFKRKYPDLERRDLSHKEKLYLRELNVITETQCTLGLTALRSDEVIDLMIKEYPAKHAEYSVILQEKERQRITDHYKEYSQLQQQNTQKVEAGKVPEYIKKAAKKAAEFNSNLNRERMEERRAYFDLQTHIIQVPQGKYKILPSEMTKVSPYPVSLIPGQFQEYYKRYSPNELRYLPLNTALYEPPLDPLDPELLALDSDGDSDEVEEMKSEKKKTKGSSVRLSIDSSSMNMSESDNTQDTQEETPQPRPKVKEKSSTPRKEGSKRSVLSKSVSGYKPKSIPNAICGICLKGKDANKKGRSERLIHCSQCDNSGHPSCLDMSAELVAVIKKYPWQCMECKTCIICGQPHHEEEMMFCDTCDRGYHTFCVGLGALPSGRWICDCCQKVPATPKKGARKVKNSKEG</sequence>
<evidence type="ECO:0000250" key="1"/>
<evidence type="ECO:0000255" key="2">
    <source>
        <dbReference type="PROSITE-ProRule" id="PRU00146"/>
    </source>
</evidence>
<evidence type="ECO:0000256" key="3">
    <source>
        <dbReference type="SAM" id="MobiDB-lite"/>
    </source>
</evidence>
<evidence type="ECO:0000305" key="4"/>
<keyword id="KW-0479">Metal-binding</keyword>
<keyword id="KW-0524">Neurogenesis</keyword>
<keyword id="KW-0539">Nucleus</keyword>
<keyword id="KW-1185">Reference proteome</keyword>
<keyword id="KW-0677">Repeat</keyword>
<keyword id="KW-0804">Transcription</keyword>
<keyword id="KW-0805">Transcription regulation</keyword>
<keyword id="KW-0862">Zinc</keyword>
<keyword id="KW-0863">Zinc-finger</keyword>